<dbReference type="EC" id="1.2.1.38" evidence="1"/>
<dbReference type="EMBL" id="CP000269">
    <property type="protein sequence ID" value="ABR88454.1"/>
    <property type="molecule type" value="Genomic_DNA"/>
</dbReference>
<dbReference type="RefSeq" id="WP_012078161.1">
    <property type="nucleotide sequence ID" value="NC_009659.1"/>
</dbReference>
<dbReference type="SMR" id="A6SUN9"/>
<dbReference type="STRING" id="375286.mma_0296"/>
<dbReference type="KEGG" id="mms:mma_0296"/>
<dbReference type="eggNOG" id="COG0002">
    <property type="taxonomic scope" value="Bacteria"/>
</dbReference>
<dbReference type="HOGENOM" id="CLU_006384_0_1_4"/>
<dbReference type="OrthoDB" id="9801289at2"/>
<dbReference type="UniPathway" id="UPA00068">
    <property type="reaction ID" value="UER00108"/>
</dbReference>
<dbReference type="Proteomes" id="UP000006388">
    <property type="component" value="Chromosome"/>
</dbReference>
<dbReference type="GO" id="GO:0005737">
    <property type="term" value="C:cytoplasm"/>
    <property type="evidence" value="ECO:0007669"/>
    <property type="project" value="UniProtKB-SubCell"/>
</dbReference>
<dbReference type="GO" id="GO:0003942">
    <property type="term" value="F:N-acetyl-gamma-glutamyl-phosphate reductase activity"/>
    <property type="evidence" value="ECO:0007669"/>
    <property type="project" value="UniProtKB-UniRule"/>
</dbReference>
<dbReference type="GO" id="GO:0051287">
    <property type="term" value="F:NAD binding"/>
    <property type="evidence" value="ECO:0007669"/>
    <property type="project" value="InterPro"/>
</dbReference>
<dbReference type="GO" id="GO:0070401">
    <property type="term" value="F:NADP+ binding"/>
    <property type="evidence" value="ECO:0007669"/>
    <property type="project" value="InterPro"/>
</dbReference>
<dbReference type="GO" id="GO:0006526">
    <property type="term" value="P:L-arginine biosynthetic process"/>
    <property type="evidence" value="ECO:0007669"/>
    <property type="project" value="UniProtKB-UniRule"/>
</dbReference>
<dbReference type="CDD" id="cd23934">
    <property type="entry name" value="AGPR_1_C"/>
    <property type="match status" value="1"/>
</dbReference>
<dbReference type="CDD" id="cd17895">
    <property type="entry name" value="AGPR_1_N"/>
    <property type="match status" value="1"/>
</dbReference>
<dbReference type="FunFam" id="3.30.360.10:FF:000014">
    <property type="entry name" value="N-acetyl-gamma-glutamyl-phosphate reductase"/>
    <property type="match status" value="1"/>
</dbReference>
<dbReference type="Gene3D" id="3.30.360.10">
    <property type="entry name" value="Dihydrodipicolinate Reductase, domain 2"/>
    <property type="match status" value="1"/>
</dbReference>
<dbReference type="Gene3D" id="3.40.50.720">
    <property type="entry name" value="NAD(P)-binding Rossmann-like Domain"/>
    <property type="match status" value="1"/>
</dbReference>
<dbReference type="HAMAP" id="MF_00150">
    <property type="entry name" value="ArgC_type1"/>
    <property type="match status" value="1"/>
</dbReference>
<dbReference type="InterPro" id="IPR023013">
    <property type="entry name" value="AGPR_AS"/>
</dbReference>
<dbReference type="InterPro" id="IPR000706">
    <property type="entry name" value="AGPR_type-1"/>
</dbReference>
<dbReference type="InterPro" id="IPR036291">
    <property type="entry name" value="NAD(P)-bd_dom_sf"/>
</dbReference>
<dbReference type="InterPro" id="IPR050085">
    <property type="entry name" value="NAGSA_dehydrogenase"/>
</dbReference>
<dbReference type="InterPro" id="IPR000534">
    <property type="entry name" value="Semialdehyde_DH_NAD-bd"/>
</dbReference>
<dbReference type="NCBIfam" id="TIGR01850">
    <property type="entry name" value="argC"/>
    <property type="match status" value="1"/>
</dbReference>
<dbReference type="PANTHER" id="PTHR32338:SF10">
    <property type="entry name" value="N-ACETYL-GAMMA-GLUTAMYL-PHOSPHATE REDUCTASE, CHLOROPLASTIC-RELATED"/>
    <property type="match status" value="1"/>
</dbReference>
<dbReference type="PANTHER" id="PTHR32338">
    <property type="entry name" value="N-ACETYL-GAMMA-GLUTAMYL-PHOSPHATE REDUCTASE, CHLOROPLASTIC-RELATED-RELATED"/>
    <property type="match status" value="1"/>
</dbReference>
<dbReference type="Pfam" id="PF01118">
    <property type="entry name" value="Semialdhyde_dh"/>
    <property type="match status" value="1"/>
</dbReference>
<dbReference type="Pfam" id="PF22698">
    <property type="entry name" value="Semialdhyde_dhC_1"/>
    <property type="match status" value="1"/>
</dbReference>
<dbReference type="SMART" id="SM00859">
    <property type="entry name" value="Semialdhyde_dh"/>
    <property type="match status" value="1"/>
</dbReference>
<dbReference type="SUPFAM" id="SSF55347">
    <property type="entry name" value="Glyceraldehyde-3-phosphate dehydrogenase-like, C-terminal domain"/>
    <property type="match status" value="1"/>
</dbReference>
<dbReference type="SUPFAM" id="SSF51735">
    <property type="entry name" value="NAD(P)-binding Rossmann-fold domains"/>
    <property type="match status" value="1"/>
</dbReference>
<dbReference type="PROSITE" id="PS01224">
    <property type="entry name" value="ARGC"/>
    <property type="match status" value="1"/>
</dbReference>
<organism>
    <name type="scientific">Janthinobacterium sp. (strain Marseille)</name>
    <name type="common">Minibacterium massiliensis</name>
    <dbReference type="NCBI Taxonomy" id="375286"/>
    <lineage>
        <taxon>Bacteria</taxon>
        <taxon>Pseudomonadati</taxon>
        <taxon>Pseudomonadota</taxon>
        <taxon>Betaproteobacteria</taxon>
        <taxon>Burkholderiales</taxon>
        <taxon>Oxalobacteraceae</taxon>
        <taxon>Janthinobacterium</taxon>
    </lineage>
</organism>
<evidence type="ECO:0000255" key="1">
    <source>
        <dbReference type="HAMAP-Rule" id="MF_00150"/>
    </source>
</evidence>
<reference key="1">
    <citation type="journal article" date="2007" name="PLoS Genet.">
        <title>Genome analysis of Minibacterium massiliensis highlights the convergent evolution of water-living bacteria.</title>
        <authorList>
            <person name="Audic S."/>
            <person name="Robert C."/>
            <person name="Campagna B."/>
            <person name="Parinello H."/>
            <person name="Claverie J.-M."/>
            <person name="Raoult D."/>
            <person name="Drancourt M."/>
        </authorList>
    </citation>
    <scope>NUCLEOTIDE SEQUENCE [LARGE SCALE GENOMIC DNA]</scope>
    <source>
        <strain>Marseille</strain>
    </source>
</reference>
<comment type="function">
    <text evidence="1">Catalyzes the NADPH-dependent reduction of N-acetyl-5-glutamyl phosphate to yield N-acetyl-L-glutamate 5-semialdehyde.</text>
</comment>
<comment type="catalytic activity">
    <reaction evidence="1">
        <text>N-acetyl-L-glutamate 5-semialdehyde + phosphate + NADP(+) = N-acetyl-L-glutamyl 5-phosphate + NADPH + H(+)</text>
        <dbReference type="Rhea" id="RHEA:21588"/>
        <dbReference type="ChEBI" id="CHEBI:15378"/>
        <dbReference type="ChEBI" id="CHEBI:29123"/>
        <dbReference type="ChEBI" id="CHEBI:43474"/>
        <dbReference type="ChEBI" id="CHEBI:57783"/>
        <dbReference type="ChEBI" id="CHEBI:57936"/>
        <dbReference type="ChEBI" id="CHEBI:58349"/>
        <dbReference type="EC" id="1.2.1.38"/>
    </reaction>
</comment>
<comment type="pathway">
    <text evidence="1">Amino-acid biosynthesis; L-arginine biosynthesis; N(2)-acetyl-L-ornithine from L-glutamate: step 3/4.</text>
</comment>
<comment type="subcellular location">
    <subcellularLocation>
        <location evidence="1">Cytoplasm</location>
    </subcellularLocation>
</comment>
<comment type="similarity">
    <text evidence="1">Belongs to the NAGSA dehydrogenase family. Type 1 subfamily.</text>
</comment>
<proteinExistence type="inferred from homology"/>
<accession>A6SUN9</accession>
<protein>
    <recommendedName>
        <fullName evidence="1">N-acetyl-gamma-glutamyl-phosphate reductase</fullName>
        <shortName evidence="1">AGPR</shortName>
        <ecNumber evidence="1">1.2.1.38</ecNumber>
    </recommendedName>
    <alternativeName>
        <fullName evidence="1">N-acetyl-glutamate semialdehyde dehydrogenase</fullName>
        <shortName evidence="1">NAGSA dehydrogenase</shortName>
    </alternativeName>
</protein>
<keyword id="KW-0028">Amino-acid biosynthesis</keyword>
<keyword id="KW-0055">Arginine biosynthesis</keyword>
<keyword id="KW-0963">Cytoplasm</keyword>
<keyword id="KW-0521">NADP</keyword>
<keyword id="KW-0560">Oxidoreductase</keyword>
<sequence>MIKVGIVGGTGYTGVELLRLLATHPEVKLTAITSRKEDGLPVADMFPSLRGRVDLAFSAPEKAKLTECDVVFFATPHGVAMAQAPELLAAGVKVIDLAADFRLQDIAAFEKWYKIPHSCPELLKEAAYGLVELNRDAIRKARIVGNPGCYPTTMQLGLAPLLQAGVIDASHLIADCKSGVSGAGRKAEVATLFSEAGDNFKAYGVSGHRHSPETLERLRLLTKDKVGLLFTPHLVPMIRGMHSTLYARLTKDIDNAALQALFEKAYGNEPFIDVMPFGSHPETRSTRASNMLRIALHRPDDGDTVVVLVVQDNLVKGASGQAVQCMNLMFGLDETAGLMHIPVLP</sequence>
<name>ARGC_JANMA</name>
<gene>
    <name evidence="1" type="primary">argC</name>
    <name type="ordered locus">mma_0296</name>
</gene>
<feature type="chain" id="PRO_1000011001" description="N-acetyl-gamma-glutamyl-phosphate reductase">
    <location>
        <begin position="1"/>
        <end position="345"/>
    </location>
</feature>
<feature type="active site" evidence="1">
    <location>
        <position position="149"/>
    </location>
</feature>